<organism>
    <name type="scientific">Arabidopsis thaliana</name>
    <name type="common">Mouse-ear cress</name>
    <dbReference type="NCBI Taxonomy" id="3702"/>
    <lineage>
        <taxon>Eukaryota</taxon>
        <taxon>Viridiplantae</taxon>
        <taxon>Streptophyta</taxon>
        <taxon>Embryophyta</taxon>
        <taxon>Tracheophyta</taxon>
        <taxon>Spermatophyta</taxon>
        <taxon>Magnoliopsida</taxon>
        <taxon>eudicotyledons</taxon>
        <taxon>Gunneridae</taxon>
        <taxon>Pentapetalae</taxon>
        <taxon>rosids</taxon>
        <taxon>malvids</taxon>
        <taxon>Brassicales</taxon>
        <taxon>Brassicaceae</taxon>
        <taxon>Camelineae</taxon>
        <taxon>Arabidopsis</taxon>
    </lineage>
</organism>
<dbReference type="EMBL" id="M25268">
    <property type="protein sequence ID" value="AAA57124.1"/>
    <property type="molecule type" value="Genomic_DNA"/>
</dbReference>
<dbReference type="EMBL" id="AC004665">
    <property type="protein sequence ID" value="AAC28542.1"/>
    <property type="molecule type" value="Genomic_DNA"/>
</dbReference>
<dbReference type="EMBL" id="CP002685">
    <property type="protein sequence ID" value="AEC10605.1"/>
    <property type="molecule type" value="Genomic_DNA"/>
</dbReference>
<dbReference type="EMBL" id="AY045996">
    <property type="protein sequence ID" value="AAK76670.1"/>
    <property type="molecule type" value="mRNA"/>
</dbReference>
<dbReference type="EMBL" id="AY079329">
    <property type="protein sequence ID" value="AAL85060.1"/>
    <property type="molecule type" value="mRNA"/>
</dbReference>
<dbReference type="PIR" id="T02465">
    <property type="entry name" value="T02465"/>
</dbReference>
<dbReference type="RefSeq" id="NP_182106.1">
    <property type="nucleotide sequence ID" value="NM_130145.6"/>
</dbReference>
<dbReference type="SMR" id="O80837"/>
<dbReference type="BioGRID" id="4526">
    <property type="interactions" value="15"/>
</dbReference>
<dbReference type="FunCoup" id="O80837">
    <property type="interactions" value="235"/>
</dbReference>
<dbReference type="IntAct" id="O80837">
    <property type="interactions" value="9"/>
</dbReference>
<dbReference type="STRING" id="3702.O80837"/>
<dbReference type="GlyGen" id="O80837">
    <property type="glycosylation" value="1 site"/>
</dbReference>
<dbReference type="iPTMnet" id="O80837"/>
<dbReference type="SwissPalm" id="O80837"/>
<dbReference type="PaxDb" id="3702-AT2G45820.1"/>
<dbReference type="ProteomicsDB" id="236228"/>
<dbReference type="EnsemblPlants" id="AT2G45820.1">
    <property type="protein sequence ID" value="AT2G45820.1"/>
    <property type="gene ID" value="AT2G45820"/>
</dbReference>
<dbReference type="GeneID" id="819190"/>
<dbReference type="Gramene" id="AT2G45820.1">
    <property type="protein sequence ID" value="AT2G45820.1"/>
    <property type="gene ID" value="AT2G45820"/>
</dbReference>
<dbReference type="KEGG" id="ath:AT2G45820"/>
<dbReference type="Araport" id="AT2G45820"/>
<dbReference type="TAIR" id="AT2G45820">
    <property type="gene designation" value="REM1.3"/>
</dbReference>
<dbReference type="eggNOG" id="ENOG502RXGE">
    <property type="taxonomic scope" value="Eukaryota"/>
</dbReference>
<dbReference type="HOGENOM" id="CLU_088771_1_1_1"/>
<dbReference type="InParanoid" id="O80837"/>
<dbReference type="OMA" id="KAIIHRR"/>
<dbReference type="OrthoDB" id="684343at2759"/>
<dbReference type="PhylomeDB" id="O80837"/>
<dbReference type="PRO" id="PR:O80837"/>
<dbReference type="Proteomes" id="UP000006548">
    <property type="component" value="Chromosome 2"/>
</dbReference>
<dbReference type="ExpressionAtlas" id="O80837">
    <property type="expression patterns" value="baseline and differential"/>
</dbReference>
<dbReference type="GO" id="GO:0005829">
    <property type="term" value="C:cytosol"/>
    <property type="evidence" value="ECO:0007005"/>
    <property type="project" value="TAIR"/>
</dbReference>
<dbReference type="GO" id="GO:0005886">
    <property type="term" value="C:plasma membrane"/>
    <property type="evidence" value="ECO:0007005"/>
    <property type="project" value="TAIR"/>
</dbReference>
<dbReference type="GO" id="GO:0009506">
    <property type="term" value="C:plasmodesma"/>
    <property type="evidence" value="ECO:0000314"/>
    <property type="project" value="TAIR"/>
</dbReference>
<dbReference type="GO" id="GO:0051607">
    <property type="term" value="P:defense response to virus"/>
    <property type="evidence" value="ECO:0000314"/>
    <property type="project" value="TAIR"/>
</dbReference>
<dbReference type="GO" id="GO:0051665">
    <property type="term" value="P:membrane raft localization"/>
    <property type="evidence" value="ECO:0000314"/>
    <property type="project" value="TAIR"/>
</dbReference>
<dbReference type="GO" id="GO:0009751">
    <property type="term" value="P:response to salicylic acid"/>
    <property type="evidence" value="ECO:0000314"/>
    <property type="project" value="TAIR"/>
</dbReference>
<dbReference type="DisProt" id="DP02969"/>
<dbReference type="InterPro" id="IPR005516">
    <property type="entry name" value="Remorin_C"/>
</dbReference>
<dbReference type="InterPro" id="IPR005518">
    <property type="entry name" value="Remorin_N"/>
</dbReference>
<dbReference type="PANTHER" id="PTHR31775">
    <property type="entry name" value="OS02G0117200 PROTEIN"/>
    <property type="match status" value="1"/>
</dbReference>
<dbReference type="PANTHER" id="PTHR31775:SF24">
    <property type="entry name" value="REMORIN"/>
    <property type="match status" value="1"/>
</dbReference>
<dbReference type="Pfam" id="PF03763">
    <property type="entry name" value="Remorin_C"/>
    <property type="match status" value="1"/>
</dbReference>
<dbReference type="Pfam" id="PF03766">
    <property type="entry name" value="Remorin_N"/>
    <property type="match status" value="1"/>
</dbReference>
<reference key="1">
    <citation type="journal article" date="1989" name="Plant Physiol.">
        <title>An auxin-regulated gene of Arabidopsis thaliana encodes a DNA-binding protein.</title>
        <authorList>
            <person name="Alliotte T."/>
            <person name="Tire C."/>
            <person name="Engler G."/>
            <person name="Peleman J."/>
            <person name="Caplan A."/>
            <person name="van Montagu M."/>
            <person name="Inze D."/>
        </authorList>
    </citation>
    <scope>NUCLEOTIDE SEQUENCE [GENOMIC DNA]</scope>
    <scope>TISSUE SPECIFICITY</scope>
    <scope>INDUCTION</scope>
    <scope>DNA-BINDING</scope>
    <source>
        <strain>cv. Columbia</strain>
    </source>
</reference>
<reference key="2">
    <citation type="journal article" date="1999" name="Nature">
        <title>Sequence and analysis of chromosome 2 of the plant Arabidopsis thaliana.</title>
        <authorList>
            <person name="Lin X."/>
            <person name="Kaul S."/>
            <person name="Rounsley S.D."/>
            <person name="Shea T.P."/>
            <person name="Benito M.-I."/>
            <person name="Town C.D."/>
            <person name="Fujii C.Y."/>
            <person name="Mason T.M."/>
            <person name="Bowman C.L."/>
            <person name="Barnstead M.E."/>
            <person name="Feldblyum T.V."/>
            <person name="Buell C.R."/>
            <person name="Ketchum K.A."/>
            <person name="Lee J.J."/>
            <person name="Ronning C.M."/>
            <person name="Koo H.L."/>
            <person name="Moffat K.S."/>
            <person name="Cronin L.A."/>
            <person name="Shen M."/>
            <person name="Pai G."/>
            <person name="Van Aken S."/>
            <person name="Umayam L."/>
            <person name="Tallon L.J."/>
            <person name="Gill J.E."/>
            <person name="Adams M.D."/>
            <person name="Carrera A.J."/>
            <person name="Creasy T.H."/>
            <person name="Goodman H.M."/>
            <person name="Somerville C.R."/>
            <person name="Copenhaver G.P."/>
            <person name="Preuss D."/>
            <person name="Nierman W.C."/>
            <person name="White O."/>
            <person name="Eisen J.A."/>
            <person name="Salzberg S.L."/>
            <person name="Fraser C.M."/>
            <person name="Venter J.C."/>
        </authorList>
    </citation>
    <scope>NUCLEOTIDE SEQUENCE [LARGE SCALE GENOMIC DNA]</scope>
    <source>
        <strain>cv. Columbia</strain>
    </source>
</reference>
<reference key="3">
    <citation type="journal article" date="2017" name="Plant J.">
        <title>Araport11: a complete reannotation of the Arabidopsis thaliana reference genome.</title>
        <authorList>
            <person name="Cheng C.Y."/>
            <person name="Krishnakumar V."/>
            <person name="Chan A.P."/>
            <person name="Thibaud-Nissen F."/>
            <person name="Schobel S."/>
            <person name="Town C.D."/>
        </authorList>
    </citation>
    <scope>GENOME REANNOTATION</scope>
    <source>
        <strain>cv. Columbia</strain>
    </source>
</reference>
<reference key="4">
    <citation type="journal article" date="2003" name="Science">
        <title>Empirical analysis of transcriptional activity in the Arabidopsis genome.</title>
        <authorList>
            <person name="Yamada K."/>
            <person name="Lim J."/>
            <person name="Dale J.M."/>
            <person name="Chen H."/>
            <person name="Shinn P."/>
            <person name="Palm C.J."/>
            <person name="Southwick A.M."/>
            <person name="Wu H.C."/>
            <person name="Kim C.J."/>
            <person name="Nguyen M."/>
            <person name="Pham P.K."/>
            <person name="Cheuk R.F."/>
            <person name="Karlin-Newmann G."/>
            <person name="Liu S.X."/>
            <person name="Lam B."/>
            <person name="Sakano H."/>
            <person name="Wu T."/>
            <person name="Yu G."/>
            <person name="Miranda M."/>
            <person name="Quach H.L."/>
            <person name="Tripp M."/>
            <person name="Chang C.H."/>
            <person name="Lee J.M."/>
            <person name="Toriumi M.J."/>
            <person name="Chan M.M."/>
            <person name="Tang C.C."/>
            <person name="Onodera C.S."/>
            <person name="Deng J.M."/>
            <person name="Akiyama K."/>
            <person name="Ansari Y."/>
            <person name="Arakawa T."/>
            <person name="Banh J."/>
            <person name="Banno F."/>
            <person name="Bowser L."/>
            <person name="Brooks S.Y."/>
            <person name="Carninci P."/>
            <person name="Chao Q."/>
            <person name="Choy N."/>
            <person name="Enju A."/>
            <person name="Goldsmith A.D."/>
            <person name="Gurjal M."/>
            <person name="Hansen N.F."/>
            <person name="Hayashizaki Y."/>
            <person name="Johnson-Hopson C."/>
            <person name="Hsuan V.W."/>
            <person name="Iida K."/>
            <person name="Karnes M."/>
            <person name="Khan S."/>
            <person name="Koesema E."/>
            <person name="Ishida J."/>
            <person name="Jiang P.X."/>
            <person name="Jones T."/>
            <person name="Kawai J."/>
            <person name="Kamiya A."/>
            <person name="Meyers C."/>
            <person name="Nakajima M."/>
            <person name="Narusaka M."/>
            <person name="Seki M."/>
            <person name="Sakurai T."/>
            <person name="Satou M."/>
            <person name="Tamse R."/>
            <person name="Vaysberg M."/>
            <person name="Wallender E.K."/>
            <person name="Wong C."/>
            <person name="Yamamura Y."/>
            <person name="Yuan S."/>
            <person name="Shinozaki K."/>
            <person name="Davis R.W."/>
            <person name="Theologis A."/>
            <person name="Ecker J.R."/>
        </authorList>
    </citation>
    <scope>NUCLEOTIDE SEQUENCE [LARGE SCALE MRNA]</scope>
    <source>
        <strain>cv. Columbia</strain>
    </source>
</reference>
<reference key="5">
    <citation type="journal article" date="2004" name="Plant Mol. Biol.">
        <title>Remorins form a novel family of coiled coil-forming oligomeric and filamentous proteins associated with apical, vascular and embryonic tissues in plants.</title>
        <authorList>
            <person name="Bariola P.A."/>
            <person name="Retelska D."/>
            <person name="Stasiak A."/>
            <person name="Kammerer R.A."/>
            <person name="Fleming A."/>
            <person name="Hijri M."/>
            <person name="Frank S."/>
            <person name="Farmer E.E."/>
        </authorList>
    </citation>
    <scope>SUBUNIT</scope>
</reference>
<reference key="6">
    <citation type="journal article" date="2009" name="Plant Physiol.">
        <title>Large-scale Arabidopsis phosphoproteome profiling reveals novel chloroplast kinase substrates and phosphorylation networks.</title>
        <authorList>
            <person name="Reiland S."/>
            <person name="Messerli G."/>
            <person name="Baerenfaller K."/>
            <person name="Gerrits B."/>
            <person name="Endler A."/>
            <person name="Grossmann J."/>
            <person name="Gruissem W."/>
            <person name="Baginsky S."/>
        </authorList>
    </citation>
    <scope>PHOSPHORYLATION [LARGE SCALE ANALYSIS] AT SER-14 AND THR-58</scope>
    <scope>IDENTIFICATION BY MASS SPECTROMETRY [LARGE SCALE ANALYSIS]</scope>
</reference>
<sequence>MAEEQKTSKVDVESPAVLAPAKEPTPAPVEVADEKIHNPPPVESKALAVVEKPIEEHTPKKASSGSADRDVILADLEKEKKTSFIKAWEESEKSKAENRAQKKISDVHAWENSKKAAVEAQLRKIEEKLEKKKAQYGEKMKNKVAAIHKLAEEKRAMVEAKKGEELLKAEEMGAKYRATGVVPKATCGCF</sequence>
<feature type="chain" id="PRO_0000311119" description="Remorin">
    <location>
        <begin position="1"/>
        <end position="190"/>
    </location>
</feature>
<feature type="region of interest" description="Disordered" evidence="2">
    <location>
        <begin position="1"/>
        <end position="45"/>
    </location>
</feature>
<feature type="region of interest" description="Disordered" evidence="2">
    <location>
        <begin position="50"/>
        <end position="69"/>
    </location>
</feature>
<feature type="coiled-coil region" evidence="1">
    <location>
        <begin position="92"/>
        <end position="147"/>
    </location>
</feature>
<feature type="compositionally biased region" description="Basic and acidic residues" evidence="2">
    <location>
        <begin position="1"/>
        <end position="12"/>
    </location>
</feature>
<feature type="modified residue" description="Phosphoserine" evidence="6">
    <location>
        <position position="14"/>
    </location>
</feature>
<feature type="modified residue" description="Phosphothreonine" evidence="6">
    <location>
        <position position="58"/>
    </location>
</feature>
<feature type="sequence conflict" description="In Ref. 1; AAA57124." evidence="5" ref="1">
    <original>K</original>
    <variation>E</variation>
    <location>
        <position position="168"/>
    </location>
</feature>
<accession>O80837</accession>
<accession>Q39087</accession>
<name>REMO_ARATH</name>
<gene>
    <name type="primary">DBP</name>
    <name type="ordered locus">At2g45820</name>
    <name type="ORF">F4I18.20</name>
</gene>
<keyword id="KW-0175">Coiled coil</keyword>
<keyword id="KW-0597">Phosphoprotein</keyword>
<keyword id="KW-1185">Reference proteome</keyword>
<evidence type="ECO:0000255" key="1"/>
<evidence type="ECO:0000256" key="2">
    <source>
        <dbReference type="SAM" id="MobiDB-lite"/>
    </source>
</evidence>
<evidence type="ECO:0000269" key="3">
    <source>
    </source>
</evidence>
<evidence type="ECO:0000269" key="4">
    <source>
    </source>
</evidence>
<evidence type="ECO:0000305" key="5"/>
<evidence type="ECO:0007744" key="6">
    <source>
    </source>
</evidence>
<comment type="function">
    <text>Exhibits a non sequence-specific DNA-binding activity.</text>
</comment>
<comment type="subunit">
    <text evidence="3">May polymerize to form filamentous structures.</text>
</comment>
<comment type="interaction">
    <interactant intactId="EBI-1788073">
        <id>O80837</id>
    </interactant>
    <interactant intactId="EBI-625213">
        <id>O82798</id>
        <label>ARR4</label>
    </interactant>
    <organismsDiffer>false</organismsDiffer>
    <experiments>3</experiments>
</comment>
<comment type="interaction">
    <interactant intactId="EBI-1788073">
        <id>O80837</id>
    </interactant>
    <interactant intactId="EBI-25518505">
        <id>F4I4I6</id>
        <label>At1g16705</label>
    </interactant>
    <organismsDiffer>false</organismsDiffer>
    <experiments>3</experiments>
</comment>
<comment type="interaction">
    <interactant intactId="EBI-1788073">
        <id>O80837</id>
    </interactant>
    <interactant intactId="EBI-21138032">
        <id>F4J355</id>
        <label>At3g44620</label>
    </interactant>
    <organismsDiffer>false</organismsDiffer>
    <experiments>3</experiments>
</comment>
<comment type="interaction">
    <interactant intactId="EBI-1788073">
        <id>O80837</id>
    </interactant>
    <interactant intactId="EBI-1644689">
        <id>O04294</id>
        <label>IMPA3</label>
    </interactant>
    <organismsDiffer>false</organismsDiffer>
    <experiments>4</experiments>
</comment>
<comment type="interaction">
    <interactant intactId="EBI-1788073">
        <id>O80837</id>
    </interactant>
    <interactant intactId="EBI-4465086">
        <id>Q9FFA5</id>
        <label>REM1.4</label>
    </interactant>
    <organismsDiffer>false</organismsDiffer>
    <experiments>6</experiments>
</comment>
<comment type="interaction">
    <interactant intactId="EBI-1788073">
        <id>O80837</id>
    </interactant>
    <interactant intactId="EBI-4442034">
        <id>Q42551</id>
        <label>SCE1</label>
    </interactant>
    <organismsDiffer>false</organismsDiffer>
    <experiments>3</experiments>
</comment>
<comment type="tissue specificity">
    <text evidence="4">Expressed in roots, leaves, stems, flowers and siliques, with a maximal expression in apical regions.</text>
</comment>
<comment type="induction">
    <text evidence="4">10-fold by auxin, 2-fold by gibberellic acid and not by cytokinin.</text>
</comment>
<comment type="similarity">
    <text evidence="5">Belongs to the remorin family.</text>
</comment>
<proteinExistence type="evidence at protein level"/>
<protein>
    <recommendedName>
        <fullName>Remorin</fullName>
    </recommendedName>
    <alternativeName>
        <fullName>DNA-binding protein</fullName>
    </alternativeName>
</protein>